<accession>C0ME18</accession>
<protein>
    <recommendedName>
        <fullName evidence="1">Beta-ketoacyl-[acyl-carrier-protein] synthase III</fullName>
        <shortName evidence="1">Beta-ketoacyl-ACP synthase III</shortName>
        <shortName evidence="1">KAS III</shortName>
        <ecNumber evidence="1">2.3.1.180</ecNumber>
    </recommendedName>
    <alternativeName>
        <fullName evidence="1">3-oxoacyl-[acyl-carrier-protein] synthase 3</fullName>
    </alternativeName>
    <alternativeName>
        <fullName evidence="1">3-oxoacyl-[acyl-carrier-protein] synthase III</fullName>
    </alternativeName>
</protein>
<dbReference type="EC" id="2.3.1.180" evidence="1"/>
<dbReference type="EMBL" id="FM204884">
    <property type="protein sequence ID" value="CAX00283.1"/>
    <property type="molecule type" value="Genomic_DNA"/>
</dbReference>
<dbReference type="SMR" id="C0ME18"/>
<dbReference type="KEGG" id="seq:SZO_15740"/>
<dbReference type="eggNOG" id="COG0332">
    <property type="taxonomic scope" value="Bacteria"/>
</dbReference>
<dbReference type="HOGENOM" id="CLU_039592_4_1_9"/>
<dbReference type="UniPathway" id="UPA00094"/>
<dbReference type="Proteomes" id="UP000001368">
    <property type="component" value="Chromosome"/>
</dbReference>
<dbReference type="GO" id="GO:0005737">
    <property type="term" value="C:cytoplasm"/>
    <property type="evidence" value="ECO:0007669"/>
    <property type="project" value="UniProtKB-SubCell"/>
</dbReference>
<dbReference type="GO" id="GO:0004315">
    <property type="term" value="F:3-oxoacyl-[acyl-carrier-protein] synthase activity"/>
    <property type="evidence" value="ECO:0007669"/>
    <property type="project" value="InterPro"/>
</dbReference>
<dbReference type="GO" id="GO:0033818">
    <property type="term" value="F:beta-ketoacyl-acyl-carrier-protein synthase III activity"/>
    <property type="evidence" value="ECO:0007669"/>
    <property type="project" value="UniProtKB-UniRule"/>
</dbReference>
<dbReference type="GO" id="GO:0006633">
    <property type="term" value="P:fatty acid biosynthetic process"/>
    <property type="evidence" value="ECO:0007669"/>
    <property type="project" value="UniProtKB-UniRule"/>
</dbReference>
<dbReference type="CDD" id="cd00830">
    <property type="entry name" value="KAS_III"/>
    <property type="match status" value="1"/>
</dbReference>
<dbReference type="FunFam" id="3.40.47.10:FF:000004">
    <property type="entry name" value="3-oxoacyl-[acyl-carrier-protein] synthase 3"/>
    <property type="match status" value="1"/>
</dbReference>
<dbReference type="Gene3D" id="3.40.47.10">
    <property type="match status" value="1"/>
</dbReference>
<dbReference type="HAMAP" id="MF_01815">
    <property type="entry name" value="FabH"/>
    <property type="match status" value="1"/>
</dbReference>
<dbReference type="InterPro" id="IPR013747">
    <property type="entry name" value="ACP_syn_III_C"/>
</dbReference>
<dbReference type="InterPro" id="IPR013751">
    <property type="entry name" value="ACP_syn_III_N"/>
</dbReference>
<dbReference type="InterPro" id="IPR004655">
    <property type="entry name" value="FabH"/>
</dbReference>
<dbReference type="InterPro" id="IPR016039">
    <property type="entry name" value="Thiolase-like"/>
</dbReference>
<dbReference type="NCBIfam" id="TIGR00747">
    <property type="entry name" value="fabH"/>
    <property type="match status" value="1"/>
</dbReference>
<dbReference type="NCBIfam" id="NF006829">
    <property type="entry name" value="PRK09352.1"/>
    <property type="match status" value="1"/>
</dbReference>
<dbReference type="PANTHER" id="PTHR43091">
    <property type="entry name" value="3-OXOACYL-[ACYL-CARRIER-PROTEIN] SYNTHASE"/>
    <property type="match status" value="1"/>
</dbReference>
<dbReference type="PANTHER" id="PTHR43091:SF1">
    <property type="entry name" value="BETA-KETOACYL-[ACYL-CARRIER-PROTEIN] SYNTHASE III, CHLOROPLASTIC"/>
    <property type="match status" value="1"/>
</dbReference>
<dbReference type="Pfam" id="PF08545">
    <property type="entry name" value="ACP_syn_III"/>
    <property type="match status" value="1"/>
</dbReference>
<dbReference type="Pfam" id="PF08541">
    <property type="entry name" value="ACP_syn_III_C"/>
    <property type="match status" value="1"/>
</dbReference>
<dbReference type="SUPFAM" id="SSF53901">
    <property type="entry name" value="Thiolase-like"/>
    <property type="match status" value="1"/>
</dbReference>
<feature type="chain" id="PRO_1000216001" description="Beta-ketoacyl-[acyl-carrier-protein] synthase III">
    <location>
        <begin position="1"/>
        <end position="324"/>
    </location>
</feature>
<feature type="region of interest" description="ACP-binding" evidence="1">
    <location>
        <begin position="250"/>
        <end position="254"/>
    </location>
</feature>
<feature type="active site" evidence="1">
    <location>
        <position position="112"/>
    </location>
</feature>
<feature type="active site" evidence="1">
    <location>
        <position position="249"/>
    </location>
</feature>
<feature type="active site" evidence="1">
    <location>
        <position position="279"/>
    </location>
</feature>
<reference key="1">
    <citation type="journal article" date="2009" name="PLoS Pathog.">
        <title>Genomic evidence for the evolution of Streptococcus equi: host restriction, increased virulence, and genetic exchange with human pathogens.</title>
        <authorList>
            <person name="Holden M.T.G."/>
            <person name="Heather Z."/>
            <person name="Paillot R."/>
            <person name="Steward K.F."/>
            <person name="Webb K."/>
            <person name="Ainslie F."/>
            <person name="Jourdan T."/>
            <person name="Bason N.C."/>
            <person name="Holroyd N.E."/>
            <person name="Mungall K."/>
            <person name="Quail M.A."/>
            <person name="Sanders M."/>
            <person name="Simmonds M."/>
            <person name="Willey D."/>
            <person name="Brooks K."/>
            <person name="Aanensen D.M."/>
            <person name="Spratt B.G."/>
            <person name="Jolley K.A."/>
            <person name="Maiden M.C.J."/>
            <person name="Kehoe M."/>
            <person name="Chanter N."/>
            <person name="Bentley S.D."/>
            <person name="Robinson C."/>
            <person name="Maskell D.J."/>
            <person name="Parkhill J."/>
            <person name="Waller A.S."/>
        </authorList>
    </citation>
    <scope>NUCLEOTIDE SEQUENCE [LARGE SCALE GENOMIC DNA]</scope>
    <source>
        <strain>H70</strain>
    </source>
</reference>
<comment type="function">
    <text evidence="1">Catalyzes the condensation reaction of fatty acid synthesis by the addition to an acyl acceptor of two carbons from malonyl-ACP. Catalyzes the first condensation reaction which initiates fatty acid synthesis and may therefore play a role in governing the total rate of fatty acid production. Possesses both acetoacetyl-ACP synthase and acetyl transacylase activities. Its substrate specificity determines the biosynthesis of branched-chain and/or straight-chain of fatty acids.</text>
</comment>
<comment type="catalytic activity">
    <reaction evidence="1">
        <text>malonyl-[ACP] + acetyl-CoA + H(+) = 3-oxobutanoyl-[ACP] + CO2 + CoA</text>
        <dbReference type="Rhea" id="RHEA:12080"/>
        <dbReference type="Rhea" id="RHEA-COMP:9623"/>
        <dbReference type="Rhea" id="RHEA-COMP:9625"/>
        <dbReference type="ChEBI" id="CHEBI:15378"/>
        <dbReference type="ChEBI" id="CHEBI:16526"/>
        <dbReference type="ChEBI" id="CHEBI:57287"/>
        <dbReference type="ChEBI" id="CHEBI:57288"/>
        <dbReference type="ChEBI" id="CHEBI:78449"/>
        <dbReference type="ChEBI" id="CHEBI:78450"/>
        <dbReference type="EC" id="2.3.1.180"/>
    </reaction>
</comment>
<comment type="pathway">
    <text evidence="1">Lipid metabolism; fatty acid biosynthesis.</text>
</comment>
<comment type="subunit">
    <text evidence="1">Homodimer.</text>
</comment>
<comment type="subcellular location">
    <subcellularLocation>
        <location evidence="1">Cytoplasm</location>
    </subcellularLocation>
</comment>
<comment type="domain">
    <text evidence="1">The last Arg residue of the ACP-binding site is essential for the weak association between ACP/AcpP and FabH.</text>
</comment>
<comment type="similarity">
    <text evidence="1">Belongs to the thiolase-like superfamily. FabH family.</text>
</comment>
<sequence>MVFSKISQVAHYTPKQVISNDDLSQIMDTSHEWISSRTGIEKRHISTVEMTSDLAIRVAEQLLAGSGYDATALDFIIVATISPDASMPSTAAKVQAAIGATNAFAFDMTAACSGFVFALAMADKLIASGAYQRGLVIGAETLSKIIDWQDRSTAVLFGDGAGGVLLEASEQQHFLAEALHTDGARGQSLTSGQSSLRSPFSQGQEVNSFLQMDGRAIFDFAIRDVSRSITAIIEQSGLAKEELDYLLLHQANRRILDKMAKKIGMPREKFLENMMHYGNTSAASIPILLSESVQNGQLKLDGSQHILLSGFGGGLTWGSLIVKI</sequence>
<name>FABH_STRS7</name>
<keyword id="KW-0012">Acyltransferase</keyword>
<keyword id="KW-0963">Cytoplasm</keyword>
<keyword id="KW-0275">Fatty acid biosynthesis</keyword>
<keyword id="KW-0276">Fatty acid metabolism</keyword>
<keyword id="KW-0444">Lipid biosynthesis</keyword>
<keyword id="KW-0443">Lipid metabolism</keyword>
<keyword id="KW-0511">Multifunctional enzyme</keyword>
<keyword id="KW-0808">Transferase</keyword>
<proteinExistence type="inferred from homology"/>
<evidence type="ECO:0000255" key="1">
    <source>
        <dbReference type="HAMAP-Rule" id="MF_01815"/>
    </source>
</evidence>
<gene>
    <name evidence="1" type="primary">fabH</name>
    <name type="ordered locus">SZO_15740</name>
</gene>
<organism>
    <name type="scientific">Streptococcus equi subsp. zooepidemicus (strain H70)</name>
    <dbReference type="NCBI Taxonomy" id="553483"/>
    <lineage>
        <taxon>Bacteria</taxon>
        <taxon>Bacillati</taxon>
        <taxon>Bacillota</taxon>
        <taxon>Bacilli</taxon>
        <taxon>Lactobacillales</taxon>
        <taxon>Streptococcaceae</taxon>
        <taxon>Streptococcus</taxon>
    </lineage>
</organism>